<reference key="1">
    <citation type="submission" date="2013-04" db="EMBL/GenBank/DDBJ databases">
        <title>The Genome Sequence of Bilophila wadsworthia 3_1_6.</title>
        <authorList>
            <consortium name="The Broad Institute Genomics Platform"/>
            <person name="Earl A."/>
            <person name="Ward D."/>
            <person name="Feldgarden M."/>
            <person name="Gevers D."/>
            <person name="Sibley C."/>
            <person name="Strauss J."/>
            <person name="Allen-Vercoe E."/>
            <person name="Walker B."/>
            <person name="Young S."/>
            <person name="Zeng Q."/>
            <person name="Gargeya S."/>
            <person name="Fitzgerald M."/>
            <person name="Haas B."/>
            <person name="Abouelleil A."/>
            <person name="Allen A.W."/>
            <person name="Alvarado L."/>
            <person name="Arachchi H.M."/>
            <person name="Berlin A.M."/>
            <person name="Chapman S.B."/>
            <person name="Gainer-Dewar J."/>
            <person name="Goldberg J."/>
            <person name="Griggs A."/>
            <person name="Gujja S."/>
            <person name="Hansen M."/>
            <person name="Howarth C."/>
            <person name="Imamovic A."/>
            <person name="Ireland A."/>
            <person name="Larimer J."/>
            <person name="McCowan C."/>
            <person name="Murphy C."/>
            <person name="Pearson M."/>
            <person name="Poon T.W."/>
            <person name="Priest M."/>
            <person name="Roberts A."/>
            <person name="Saif S."/>
            <person name="Shea T."/>
            <person name="Sisk P."/>
            <person name="Sykes S."/>
            <person name="Wortman J."/>
            <person name="Nusbaum C."/>
            <person name="Birren B."/>
        </authorList>
    </citation>
    <scope>NUCLEOTIDE SEQUENCE [LARGE SCALE GENOMIC DNA]</scope>
    <source>
        <strain>3_1_6</strain>
    </source>
</reference>
<reference key="2">
    <citation type="journal article" date="2020" name="Proc. Natl. Acad. Sci. U.S.A.">
        <title>Two radical-dependent mechanisms for anaerobic degradation of the globally abundant organosulfur compound dihydroxypropanesulfonate.</title>
        <authorList>
            <person name="Liu J."/>
            <person name="Wei Y."/>
            <person name="Lin L."/>
            <person name="Teng L."/>
            <person name="Yin J."/>
            <person name="Lu Q."/>
            <person name="Chen J."/>
            <person name="Zheng Y."/>
            <person name="Li Y."/>
            <person name="Xu R."/>
            <person name="Zhai W."/>
            <person name="Liu Y."/>
            <person name="Liu Y."/>
            <person name="Cao P."/>
            <person name="Ang E.L."/>
            <person name="Zhao H."/>
            <person name="Yuchi Z."/>
            <person name="Zhang Y."/>
        </authorList>
    </citation>
    <scope>FUNCTION</scope>
    <scope>COFACTOR</scope>
    <source>
        <strain>3_1_6</strain>
    </source>
</reference>
<keyword id="KW-0004">4Fe-4S</keyword>
<keyword id="KW-0408">Iron</keyword>
<keyword id="KW-0411">Iron-sulfur</keyword>
<keyword id="KW-0479">Metal-binding</keyword>
<keyword id="KW-0560">Oxidoreductase</keyword>
<keyword id="KW-1185">Reference proteome</keyword>
<keyword id="KW-0677">Repeat</keyword>
<keyword id="KW-0949">S-adenosyl-L-methionine</keyword>
<accession>E5Y7I3</accession>
<protein>
    <recommendedName>
        <fullName evidence="6">(2S)-3-sulfopropanediol sulfolyase activating enzyme</fullName>
        <ecNumber evidence="7">1.97.1.-</ecNumber>
    </recommendedName>
</protein>
<evidence type="ECO:0000250" key="1">
    <source>
        <dbReference type="UniProtKB" id="P0A9N4"/>
    </source>
</evidence>
<evidence type="ECO:0000255" key="2">
    <source>
        <dbReference type="PROSITE-ProRule" id="PRU00711"/>
    </source>
</evidence>
<evidence type="ECO:0000255" key="3">
    <source>
        <dbReference type="PROSITE-ProRule" id="PRU01266"/>
    </source>
</evidence>
<evidence type="ECO:0000269" key="4">
    <source>
    </source>
</evidence>
<evidence type="ECO:0000303" key="5">
    <source>
    </source>
</evidence>
<evidence type="ECO:0000305" key="6"/>
<evidence type="ECO:0000305" key="7">
    <source>
    </source>
</evidence>
<evidence type="ECO:0000312" key="8">
    <source>
        <dbReference type="EMBL" id="EFV44083.1"/>
    </source>
</evidence>
<dbReference type="EC" id="1.97.1.-" evidence="7"/>
<dbReference type="EMBL" id="ADCP02000001">
    <property type="protein sequence ID" value="EFV44083.1"/>
    <property type="molecule type" value="Genomic_DNA"/>
</dbReference>
<dbReference type="RefSeq" id="WP_005027952.1">
    <property type="nucleotide sequence ID" value="NZ_KE150238.1"/>
</dbReference>
<dbReference type="SMR" id="E5Y7I3"/>
<dbReference type="STRING" id="563192.HMPREF0179_02148"/>
<dbReference type="GeneID" id="78085286"/>
<dbReference type="eggNOG" id="COG1180">
    <property type="taxonomic scope" value="Bacteria"/>
</dbReference>
<dbReference type="HOGENOM" id="CLU_058969_0_0_7"/>
<dbReference type="OrthoDB" id="9782387at2"/>
<dbReference type="UniPathway" id="UPA00338"/>
<dbReference type="Proteomes" id="UP000006034">
    <property type="component" value="Unassembled WGS sequence"/>
</dbReference>
<dbReference type="GO" id="GO:0051539">
    <property type="term" value="F:4 iron, 4 sulfur cluster binding"/>
    <property type="evidence" value="ECO:0007669"/>
    <property type="project" value="UniProtKB-KW"/>
</dbReference>
<dbReference type="GO" id="GO:0046872">
    <property type="term" value="F:metal ion binding"/>
    <property type="evidence" value="ECO:0007669"/>
    <property type="project" value="UniProtKB-KW"/>
</dbReference>
<dbReference type="GO" id="GO:0016491">
    <property type="term" value="F:oxidoreductase activity"/>
    <property type="evidence" value="ECO:0007669"/>
    <property type="project" value="UniProtKB-KW"/>
</dbReference>
<dbReference type="GO" id="GO:0046306">
    <property type="term" value="P:alkanesulfonate catabolic process"/>
    <property type="evidence" value="ECO:0007669"/>
    <property type="project" value="UniProtKB-UniPathway"/>
</dbReference>
<dbReference type="Gene3D" id="3.30.70.20">
    <property type="match status" value="1"/>
</dbReference>
<dbReference type="Gene3D" id="3.20.20.70">
    <property type="entry name" value="Aldolase class I"/>
    <property type="match status" value="1"/>
</dbReference>
<dbReference type="InterPro" id="IPR017896">
    <property type="entry name" value="4Fe4S_Fe-S-bd"/>
</dbReference>
<dbReference type="InterPro" id="IPR017900">
    <property type="entry name" value="4Fe4S_Fe_S_CS"/>
</dbReference>
<dbReference type="InterPro" id="IPR013785">
    <property type="entry name" value="Aldolase_TIM"/>
</dbReference>
<dbReference type="InterPro" id="IPR040074">
    <property type="entry name" value="BssD/PflA/YjjW"/>
</dbReference>
<dbReference type="InterPro" id="IPR034457">
    <property type="entry name" value="Organic_radical-activating"/>
</dbReference>
<dbReference type="InterPro" id="IPR012839">
    <property type="entry name" value="Organic_radical_activase"/>
</dbReference>
<dbReference type="InterPro" id="IPR001989">
    <property type="entry name" value="Radical_activat_CS"/>
</dbReference>
<dbReference type="InterPro" id="IPR007197">
    <property type="entry name" value="rSAM"/>
</dbReference>
<dbReference type="NCBIfam" id="TIGR02494">
    <property type="entry name" value="PFLE_PFLC"/>
    <property type="match status" value="1"/>
</dbReference>
<dbReference type="PANTHER" id="PTHR30352:SF4">
    <property type="entry name" value="PYRUVATE FORMATE-LYASE 2-ACTIVATING ENZYME"/>
    <property type="match status" value="1"/>
</dbReference>
<dbReference type="PANTHER" id="PTHR30352">
    <property type="entry name" value="PYRUVATE FORMATE-LYASE-ACTIVATING ENZYME"/>
    <property type="match status" value="1"/>
</dbReference>
<dbReference type="Pfam" id="PF00037">
    <property type="entry name" value="Fer4"/>
    <property type="match status" value="1"/>
</dbReference>
<dbReference type="Pfam" id="PF13353">
    <property type="entry name" value="Fer4_12"/>
    <property type="match status" value="1"/>
</dbReference>
<dbReference type="Pfam" id="PF04055">
    <property type="entry name" value="Radical_SAM"/>
    <property type="match status" value="1"/>
</dbReference>
<dbReference type="PIRSF" id="PIRSF000371">
    <property type="entry name" value="PFL_act_enz"/>
    <property type="match status" value="1"/>
</dbReference>
<dbReference type="SFLD" id="SFLDG01118">
    <property type="entry name" value="activating_enzymes__group_2"/>
    <property type="match status" value="1"/>
</dbReference>
<dbReference type="SFLD" id="SFLDG01066">
    <property type="entry name" value="organic_radical-activating_enz"/>
    <property type="match status" value="1"/>
</dbReference>
<dbReference type="SUPFAM" id="SSF54862">
    <property type="entry name" value="4Fe-4S ferredoxins"/>
    <property type="match status" value="1"/>
</dbReference>
<dbReference type="PROSITE" id="PS00198">
    <property type="entry name" value="4FE4S_FER_1"/>
    <property type="match status" value="1"/>
</dbReference>
<dbReference type="PROSITE" id="PS51379">
    <property type="entry name" value="4FE4S_FER_2"/>
    <property type="match status" value="2"/>
</dbReference>
<dbReference type="PROSITE" id="PS01087">
    <property type="entry name" value="RADICAL_ACTIVATING"/>
    <property type="match status" value="1"/>
</dbReference>
<dbReference type="PROSITE" id="PS51918">
    <property type="entry name" value="RADICAL_SAM"/>
    <property type="match status" value="1"/>
</dbReference>
<gene>
    <name evidence="5" type="primary">hpsH</name>
    <name evidence="8" type="ORF">HMPREF0179_02148</name>
</gene>
<proteinExistence type="inferred from homology"/>
<name>HPSH_BILW3</name>
<feature type="chain" id="PRO_0000457588" description="(2S)-3-sulfopropanediol sulfolyase activating enzyme">
    <location>
        <begin position="1"/>
        <end position="302"/>
    </location>
</feature>
<feature type="domain" description="Radical SAM core" evidence="3">
    <location>
        <begin position="19"/>
        <end position="301"/>
    </location>
</feature>
<feature type="domain" description="4Fe-4S ferredoxin-type 1" evidence="2">
    <location>
        <begin position="50"/>
        <end position="81"/>
    </location>
</feature>
<feature type="domain" description="4Fe-4S ferredoxin-type 2" evidence="2">
    <location>
        <begin position="82"/>
        <end position="111"/>
    </location>
</feature>
<feature type="binding site" evidence="3">
    <location>
        <position position="33"/>
    </location>
    <ligand>
        <name>[4Fe-4S] cluster</name>
        <dbReference type="ChEBI" id="CHEBI:49883"/>
        <label>1</label>
        <note>4Fe-4S-S-AdoMet</note>
    </ligand>
</feature>
<feature type="binding site" evidence="3">
    <location>
        <position position="37"/>
    </location>
    <ligand>
        <name>[4Fe-4S] cluster</name>
        <dbReference type="ChEBI" id="CHEBI:49883"/>
        <label>1</label>
        <note>4Fe-4S-S-AdoMet</note>
    </ligand>
</feature>
<feature type="binding site" evidence="1">
    <location>
        <begin position="39"/>
        <end position="41"/>
    </location>
    <ligand>
        <name>S-adenosyl-L-methionine</name>
        <dbReference type="ChEBI" id="CHEBI:59789"/>
    </ligand>
</feature>
<feature type="binding site" evidence="3">
    <location>
        <position position="40"/>
    </location>
    <ligand>
        <name>[4Fe-4S] cluster</name>
        <dbReference type="ChEBI" id="CHEBI:49883"/>
        <label>1</label>
        <note>4Fe-4S-S-AdoMet</note>
    </ligand>
</feature>
<feature type="binding site" evidence="2">
    <location>
        <position position="59"/>
    </location>
    <ligand>
        <name>[4Fe-4S] cluster</name>
        <dbReference type="ChEBI" id="CHEBI:49883"/>
        <label>2</label>
    </ligand>
</feature>
<feature type="binding site" evidence="2">
    <location>
        <position position="65"/>
    </location>
    <ligand>
        <name>[4Fe-4S] cluster</name>
        <dbReference type="ChEBI" id="CHEBI:49883"/>
        <label>2</label>
    </ligand>
</feature>
<feature type="binding site" evidence="2">
    <location>
        <position position="68"/>
    </location>
    <ligand>
        <name>[4Fe-4S] cluster</name>
        <dbReference type="ChEBI" id="CHEBI:49883"/>
        <label>2</label>
    </ligand>
</feature>
<feature type="binding site" evidence="2">
    <location>
        <position position="72"/>
    </location>
    <ligand>
        <name>[4Fe-4S] cluster</name>
        <dbReference type="ChEBI" id="CHEBI:49883"/>
        <label>3</label>
    </ligand>
</feature>
<feature type="binding site" evidence="2">
    <location>
        <position position="91"/>
    </location>
    <ligand>
        <name>[4Fe-4S] cluster</name>
        <dbReference type="ChEBI" id="CHEBI:49883"/>
        <label>3</label>
    </ligand>
</feature>
<feature type="binding site" evidence="2">
    <location>
        <position position="94"/>
    </location>
    <ligand>
        <name>[4Fe-4S] cluster</name>
        <dbReference type="ChEBI" id="CHEBI:49883"/>
        <label>3</label>
    </ligand>
</feature>
<feature type="binding site" evidence="2">
    <location>
        <position position="97"/>
    </location>
    <ligand>
        <name>[4Fe-4S] cluster</name>
        <dbReference type="ChEBI" id="CHEBI:49883"/>
        <label>3</label>
    </ligand>
</feature>
<feature type="binding site" evidence="2">
    <location>
        <position position="101"/>
    </location>
    <ligand>
        <name>[4Fe-4S] cluster</name>
        <dbReference type="ChEBI" id="CHEBI:49883"/>
        <label>2</label>
    </ligand>
</feature>
<feature type="binding site" evidence="1">
    <location>
        <position position="141"/>
    </location>
    <ligand>
        <name>S-adenosyl-L-methionine</name>
        <dbReference type="ChEBI" id="CHEBI:59789"/>
    </ligand>
</feature>
<feature type="binding site" evidence="1">
    <location>
        <begin position="190"/>
        <end position="192"/>
    </location>
    <ligand>
        <name>S-adenosyl-L-methionine</name>
        <dbReference type="ChEBI" id="CHEBI:59789"/>
    </ligand>
</feature>
<comment type="function">
    <text evidence="4">Involved in the degradation of the organosulfur compound 2(S)-dihydroxypropanesulfonate (DHPS) (PubMed:32571930). Catalyzes activation of the (2S)-3-sulfopropanediol sulfolyase HpsG under anaerobic conditions by generation of an organic free radical on a glycine residue (PubMed:32571930).</text>
</comment>
<comment type="catalytic activity">
    <reaction evidence="7">
        <text>glycyl-[protein] + reduced [flavodoxin] + S-adenosyl-L-methionine = glycin-2-yl radical-[protein] + semiquinone [flavodoxin] + 5'-deoxyadenosine + L-methionine + H(+)</text>
        <dbReference type="Rhea" id="RHEA:61976"/>
        <dbReference type="Rhea" id="RHEA-COMP:10622"/>
        <dbReference type="Rhea" id="RHEA-COMP:14480"/>
        <dbReference type="Rhea" id="RHEA-COMP:15993"/>
        <dbReference type="Rhea" id="RHEA-COMP:15994"/>
        <dbReference type="ChEBI" id="CHEBI:15378"/>
        <dbReference type="ChEBI" id="CHEBI:17319"/>
        <dbReference type="ChEBI" id="CHEBI:29947"/>
        <dbReference type="ChEBI" id="CHEBI:32722"/>
        <dbReference type="ChEBI" id="CHEBI:57618"/>
        <dbReference type="ChEBI" id="CHEBI:57844"/>
        <dbReference type="ChEBI" id="CHEBI:59789"/>
        <dbReference type="ChEBI" id="CHEBI:140311"/>
    </reaction>
    <physiologicalReaction direction="left-to-right" evidence="7">
        <dbReference type="Rhea" id="RHEA:61977"/>
    </physiologicalReaction>
</comment>
<comment type="cofactor">
    <cofactor evidence="4">
        <name>[4Fe-4S] cluster</name>
        <dbReference type="ChEBI" id="CHEBI:49883"/>
    </cofactor>
    <text evidence="2 3">Binds 3 [4Fe-4S] clusters. One cluster is coordinated with 3 cysteines and an exchangeable S-adenosyl-L-methionine.</text>
</comment>
<comment type="pathway">
    <text evidence="7">Organosulfur degradation; alkanesulfonate degradation.</text>
</comment>
<comment type="similarity">
    <text evidence="6">Belongs to the organic radical-activating enzymes family.</text>
</comment>
<sequence>MLDRQQTGIVFNVQKFSVHDGEGIRTLVFLKGCPLHCPWCSNPESQRREPERAYNPTRCLTAAVCGRCAKACPTGAVSIVGGLVCFDRSKCTGCNACVRACPSGAQTVYGETQSVDQILSRVEEDGVFYTRSGGGLTLSGGEALAQPDFALALLREAKKRHIHTTIETCGHYPTEVLDQACRVLDALIFDIKCLDSARHKKATGVGSELILKNIGHVFEHFPDLPVLIRTPVIPGFNDTEEDILGIREMIPRKANIRYEALTYHRMGQPKYGYLGRRYELEGVKADEAFMKRLNIMLKSYEK</sequence>
<organism>
    <name type="scientific">Bilophila wadsworthia (strain 3_1_6)</name>
    <dbReference type="NCBI Taxonomy" id="563192"/>
    <lineage>
        <taxon>Bacteria</taxon>
        <taxon>Pseudomonadati</taxon>
        <taxon>Thermodesulfobacteriota</taxon>
        <taxon>Desulfovibrionia</taxon>
        <taxon>Desulfovibrionales</taxon>
        <taxon>Desulfovibrionaceae</taxon>
        <taxon>Bilophila</taxon>
    </lineage>
</organism>